<sequence>MSAKDVKFGDSARSKMIAGVNVLADAVKVTLGPKGRNVVIDRSFGAPHITKDGVTVAKEISLKDKFENMGAQLVREVSSKTNDIAGDGTTTATVLAQAILNEGIKSVTAGMNPMDLKRGIDIAVKTVVENIRSIAKPADDFKAIEQVGSISANSDTTVGKLIAQAMEKVGKEGVITVEEGSGFEDALDVVEGMQFDRGYISPYFANKQDTLTAELENPFILLVDKKISNIRELISVLEAVAKTGKPLLIIAEDVEGEALATLVVNNMRGIIKVCAVKAPGFGDRRKAMLQDIAILTGATVISEEVGMSLEQATLQDLGTAHKITVSKENTVIVDGAGDAAAIAERVQQIRAQIEESTSEYDREKLQERVAKLAGGVAVIKIGAATEVEMKEKKDRVDDALHATRAAVEEGVVAGGGVALVRAVNALEGLKGANEDQTAGINILRRAIEAPLRQIVANAGDEPSVVINAVKNGEGNFGYNAATGEYGDMLEMGILDPAKVTRSALEHAASVAGLMLTTECMITDIPEDKPAAPDMGGMGGMGGMM</sequence>
<feature type="chain" id="PRO_1000129961" description="Chaperonin GroEL">
    <location>
        <begin position="1"/>
        <end position="544"/>
    </location>
</feature>
<feature type="binding site" evidence="1">
    <location>
        <begin position="30"/>
        <end position="33"/>
    </location>
    <ligand>
        <name>ATP</name>
        <dbReference type="ChEBI" id="CHEBI:30616"/>
    </ligand>
</feature>
<feature type="binding site" evidence="1">
    <location>
        <position position="51"/>
    </location>
    <ligand>
        <name>ATP</name>
        <dbReference type="ChEBI" id="CHEBI:30616"/>
    </ligand>
</feature>
<feature type="binding site" evidence="1">
    <location>
        <begin position="87"/>
        <end position="91"/>
    </location>
    <ligand>
        <name>ATP</name>
        <dbReference type="ChEBI" id="CHEBI:30616"/>
    </ligand>
</feature>
<feature type="binding site" evidence="1">
    <location>
        <position position="415"/>
    </location>
    <ligand>
        <name>ATP</name>
        <dbReference type="ChEBI" id="CHEBI:30616"/>
    </ligand>
</feature>
<feature type="binding site" evidence="1">
    <location>
        <begin position="479"/>
        <end position="481"/>
    </location>
    <ligand>
        <name>ATP</name>
        <dbReference type="ChEBI" id="CHEBI:30616"/>
    </ligand>
</feature>
<feature type="binding site" evidence="1">
    <location>
        <position position="495"/>
    </location>
    <ligand>
        <name>ATP</name>
        <dbReference type="ChEBI" id="CHEBI:30616"/>
    </ligand>
</feature>
<organism>
    <name type="scientific">Acinetobacter baumannii (strain AYE)</name>
    <dbReference type="NCBI Taxonomy" id="509173"/>
    <lineage>
        <taxon>Bacteria</taxon>
        <taxon>Pseudomonadati</taxon>
        <taxon>Pseudomonadota</taxon>
        <taxon>Gammaproteobacteria</taxon>
        <taxon>Moraxellales</taxon>
        <taxon>Moraxellaceae</taxon>
        <taxon>Acinetobacter</taxon>
        <taxon>Acinetobacter calcoaceticus/baumannii complex</taxon>
    </lineage>
</organism>
<name>CH60_ACIBY</name>
<dbReference type="EC" id="5.6.1.7" evidence="1"/>
<dbReference type="EMBL" id="CU459141">
    <property type="protein sequence ID" value="CAM85776.1"/>
    <property type="molecule type" value="Genomic_DNA"/>
</dbReference>
<dbReference type="RefSeq" id="WP_001274623.1">
    <property type="nucleotide sequence ID" value="NZ_JBDGFB010000021.1"/>
</dbReference>
<dbReference type="SMR" id="B0VDR6"/>
<dbReference type="EnsemblBacteria" id="CAM85776">
    <property type="protein sequence ID" value="CAM85776"/>
    <property type="gene ID" value="ABAYE0823"/>
</dbReference>
<dbReference type="GeneID" id="92894939"/>
<dbReference type="KEGG" id="aby:ABAYE0823"/>
<dbReference type="HOGENOM" id="CLU_016503_3_0_6"/>
<dbReference type="GO" id="GO:0005737">
    <property type="term" value="C:cytoplasm"/>
    <property type="evidence" value="ECO:0007669"/>
    <property type="project" value="UniProtKB-SubCell"/>
</dbReference>
<dbReference type="GO" id="GO:0005524">
    <property type="term" value="F:ATP binding"/>
    <property type="evidence" value="ECO:0007669"/>
    <property type="project" value="UniProtKB-UniRule"/>
</dbReference>
<dbReference type="GO" id="GO:0140662">
    <property type="term" value="F:ATP-dependent protein folding chaperone"/>
    <property type="evidence" value="ECO:0007669"/>
    <property type="project" value="InterPro"/>
</dbReference>
<dbReference type="GO" id="GO:0016853">
    <property type="term" value="F:isomerase activity"/>
    <property type="evidence" value="ECO:0007669"/>
    <property type="project" value="UniProtKB-KW"/>
</dbReference>
<dbReference type="GO" id="GO:0051082">
    <property type="term" value="F:unfolded protein binding"/>
    <property type="evidence" value="ECO:0007669"/>
    <property type="project" value="UniProtKB-UniRule"/>
</dbReference>
<dbReference type="GO" id="GO:0042026">
    <property type="term" value="P:protein refolding"/>
    <property type="evidence" value="ECO:0007669"/>
    <property type="project" value="UniProtKB-UniRule"/>
</dbReference>
<dbReference type="CDD" id="cd03344">
    <property type="entry name" value="GroEL"/>
    <property type="match status" value="1"/>
</dbReference>
<dbReference type="FunFam" id="1.10.560.10:FF:000001">
    <property type="entry name" value="60 kDa chaperonin"/>
    <property type="match status" value="1"/>
</dbReference>
<dbReference type="FunFam" id="3.50.7.10:FF:000001">
    <property type="entry name" value="60 kDa chaperonin"/>
    <property type="match status" value="1"/>
</dbReference>
<dbReference type="Gene3D" id="3.50.7.10">
    <property type="entry name" value="GroEL"/>
    <property type="match status" value="1"/>
</dbReference>
<dbReference type="Gene3D" id="1.10.560.10">
    <property type="entry name" value="GroEL-like equatorial domain"/>
    <property type="match status" value="1"/>
</dbReference>
<dbReference type="Gene3D" id="3.30.260.10">
    <property type="entry name" value="TCP-1-like chaperonin intermediate domain"/>
    <property type="match status" value="1"/>
</dbReference>
<dbReference type="HAMAP" id="MF_00600">
    <property type="entry name" value="CH60"/>
    <property type="match status" value="1"/>
</dbReference>
<dbReference type="InterPro" id="IPR018370">
    <property type="entry name" value="Chaperonin_Cpn60_CS"/>
</dbReference>
<dbReference type="InterPro" id="IPR001844">
    <property type="entry name" value="Cpn60/GroEL"/>
</dbReference>
<dbReference type="InterPro" id="IPR002423">
    <property type="entry name" value="Cpn60/GroEL/TCP-1"/>
</dbReference>
<dbReference type="InterPro" id="IPR027409">
    <property type="entry name" value="GroEL-like_apical_dom_sf"/>
</dbReference>
<dbReference type="InterPro" id="IPR027413">
    <property type="entry name" value="GROEL-like_equatorial_sf"/>
</dbReference>
<dbReference type="InterPro" id="IPR027410">
    <property type="entry name" value="TCP-1-like_intermed_sf"/>
</dbReference>
<dbReference type="NCBIfam" id="TIGR02348">
    <property type="entry name" value="GroEL"/>
    <property type="match status" value="1"/>
</dbReference>
<dbReference type="NCBIfam" id="NF000592">
    <property type="entry name" value="PRK00013.1"/>
    <property type="match status" value="1"/>
</dbReference>
<dbReference type="NCBIfam" id="NF009487">
    <property type="entry name" value="PRK12849.1"/>
    <property type="match status" value="1"/>
</dbReference>
<dbReference type="NCBIfam" id="NF009488">
    <property type="entry name" value="PRK12850.1"/>
    <property type="match status" value="1"/>
</dbReference>
<dbReference type="NCBIfam" id="NF009489">
    <property type="entry name" value="PRK12851.1"/>
    <property type="match status" value="1"/>
</dbReference>
<dbReference type="PANTHER" id="PTHR45633">
    <property type="entry name" value="60 KDA HEAT SHOCK PROTEIN, MITOCHONDRIAL"/>
    <property type="match status" value="1"/>
</dbReference>
<dbReference type="Pfam" id="PF00118">
    <property type="entry name" value="Cpn60_TCP1"/>
    <property type="match status" value="1"/>
</dbReference>
<dbReference type="PRINTS" id="PR00298">
    <property type="entry name" value="CHAPERONIN60"/>
</dbReference>
<dbReference type="SUPFAM" id="SSF52029">
    <property type="entry name" value="GroEL apical domain-like"/>
    <property type="match status" value="1"/>
</dbReference>
<dbReference type="SUPFAM" id="SSF48592">
    <property type="entry name" value="GroEL equatorial domain-like"/>
    <property type="match status" value="1"/>
</dbReference>
<dbReference type="SUPFAM" id="SSF54849">
    <property type="entry name" value="GroEL-intermediate domain like"/>
    <property type="match status" value="1"/>
</dbReference>
<dbReference type="PROSITE" id="PS00296">
    <property type="entry name" value="CHAPERONINS_CPN60"/>
    <property type="match status" value="1"/>
</dbReference>
<accession>B0VDR6</accession>
<proteinExistence type="inferred from homology"/>
<keyword id="KW-0067">ATP-binding</keyword>
<keyword id="KW-0143">Chaperone</keyword>
<keyword id="KW-0963">Cytoplasm</keyword>
<keyword id="KW-0413">Isomerase</keyword>
<keyword id="KW-0547">Nucleotide-binding</keyword>
<keyword id="KW-0346">Stress response</keyword>
<protein>
    <recommendedName>
        <fullName evidence="1">Chaperonin GroEL</fullName>
        <ecNumber evidence="1">5.6.1.7</ecNumber>
    </recommendedName>
    <alternativeName>
        <fullName evidence="1">60 kDa chaperonin</fullName>
    </alternativeName>
    <alternativeName>
        <fullName evidence="1">Chaperonin-60</fullName>
        <shortName evidence="1">Cpn60</shortName>
    </alternativeName>
</protein>
<reference key="1">
    <citation type="journal article" date="2008" name="PLoS ONE">
        <title>Comparative analysis of Acinetobacters: three genomes for three lifestyles.</title>
        <authorList>
            <person name="Vallenet D."/>
            <person name="Nordmann P."/>
            <person name="Barbe V."/>
            <person name="Poirel L."/>
            <person name="Mangenot S."/>
            <person name="Bataille E."/>
            <person name="Dossat C."/>
            <person name="Gas S."/>
            <person name="Kreimeyer A."/>
            <person name="Lenoble P."/>
            <person name="Oztas S."/>
            <person name="Poulain J."/>
            <person name="Segurens B."/>
            <person name="Robert C."/>
            <person name="Abergel C."/>
            <person name="Claverie J.-M."/>
            <person name="Raoult D."/>
            <person name="Medigue C."/>
            <person name="Weissenbach J."/>
            <person name="Cruveiller S."/>
        </authorList>
    </citation>
    <scope>NUCLEOTIDE SEQUENCE [LARGE SCALE GENOMIC DNA]</scope>
    <source>
        <strain>AYE</strain>
    </source>
</reference>
<comment type="function">
    <text evidence="1">Together with its co-chaperonin GroES, plays an essential role in assisting protein folding. The GroEL-GroES system forms a nano-cage that allows encapsulation of the non-native substrate proteins and provides a physical environment optimized to promote and accelerate protein folding.</text>
</comment>
<comment type="catalytic activity">
    <reaction evidence="1">
        <text>ATP + H2O + a folded polypeptide = ADP + phosphate + an unfolded polypeptide.</text>
        <dbReference type="EC" id="5.6.1.7"/>
    </reaction>
</comment>
<comment type="subunit">
    <text evidence="1">Forms a cylinder of 14 subunits composed of two heptameric rings stacked back-to-back. Interacts with the co-chaperonin GroES.</text>
</comment>
<comment type="subcellular location">
    <subcellularLocation>
        <location evidence="1">Cytoplasm</location>
    </subcellularLocation>
</comment>
<comment type="similarity">
    <text evidence="1">Belongs to the chaperonin (HSP60) family.</text>
</comment>
<gene>
    <name evidence="1" type="primary">groEL</name>
    <name evidence="1" type="synonym">groL</name>
    <name type="ordered locus">ABAYE0823</name>
</gene>
<evidence type="ECO:0000255" key="1">
    <source>
        <dbReference type="HAMAP-Rule" id="MF_00600"/>
    </source>
</evidence>